<protein>
    <recommendedName>
        <fullName>ER membrane protein complex subunit 3</fullName>
    </recommendedName>
    <alternativeName>
        <fullName>Altered inheritance rate of mitochondria protein 27</fullName>
    </alternativeName>
</protein>
<name>EMC3_YEAS1</name>
<organism>
    <name type="scientific">Saccharomyces cerevisiae (strain RM11-1a)</name>
    <name type="common">Baker's yeast</name>
    <dbReference type="NCBI Taxonomy" id="285006"/>
    <lineage>
        <taxon>Eukaryota</taxon>
        <taxon>Fungi</taxon>
        <taxon>Dikarya</taxon>
        <taxon>Ascomycota</taxon>
        <taxon>Saccharomycotina</taxon>
        <taxon>Saccharomycetes</taxon>
        <taxon>Saccharomycetales</taxon>
        <taxon>Saccharomycetaceae</taxon>
        <taxon>Saccharomyces</taxon>
    </lineage>
</organism>
<accession>B3LQQ2</accession>
<evidence type="ECO:0000250" key="1"/>
<evidence type="ECO:0000255" key="2"/>
<evidence type="ECO:0000305" key="3"/>
<proteinExistence type="inferred from homology"/>
<reference key="1">
    <citation type="submission" date="2005-03" db="EMBL/GenBank/DDBJ databases">
        <title>Annotation of the Saccharomyces cerevisiae RM11-1a genome.</title>
        <authorList>
            <consortium name="The Broad Institute Genome Sequencing Platform"/>
            <person name="Birren B.W."/>
            <person name="Lander E.S."/>
            <person name="Galagan J.E."/>
            <person name="Nusbaum C."/>
            <person name="Devon K."/>
            <person name="Cuomo C."/>
            <person name="Jaffe D.B."/>
            <person name="Butler J."/>
            <person name="Alvarez P."/>
            <person name="Gnerre S."/>
            <person name="Grabherr M."/>
            <person name="Kleber M."/>
            <person name="Mauceli E.W."/>
            <person name="Brockman W."/>
            <person name="MacCallum I.A."/>
            <person name="Rounsley S."/>
            <person name="Young S.K."/>
            <person name="LaButti K."/>
            <person name="Pushparaj V."/>
            <person name="DeCaprio D."/>
            <person name="Crawford M."/>
            <person name="Koehrsen M."/>
            <person name="Engels R."/>
            <person name="Montgomery P."/>
            <person name="Pearson M."/>
            <person name="Howarth C."/>
            <person name="Larson L."/>
            <person name="Luoma S."/>
            <person name="White J."/>
            <person name="O'Leary S."/>
            <person name="Kodira C.D."/>
            <person name="Zeng Q."/>
            <person name="Yandava C."/>
            <person name="Alvarado L."/>
            <person name="Pratt S."/>
            <person name="Kruglyak L."/>
        </authorList>
    </citation>
    <scope>NUCLEOTIDE SEQUENCE [LARGE SCALE GENOMIC DNA]</scope>
    <source>
        <strain>RM11-1a</strain>
    </source>
</reference>
<dbReference type="EMBL" id="CH408051">
    <property type="protein sequence ID" value="EDV12905.1"/>
    <property type="status" value="ALT_INIT"/>
    <property type="molecule type" value="Genomic_DNA"/>
</dbReference>
<dbReference type="SMR" id="B3LQQ2"/>
<dbReference type="HOGENOM" id="CLU_060791_0_0_1"/>
<dbReference type="OrthoDB" id="37941at4893"/>
<dbReference type="Proteomes" id="UP000008335">
    <property type="component" value="Unassembled WGS sequence"/>
</dbReference>
<dbReference type="GO" id="GO:0072546">
    <property type="term" value="C:EMC complex"/>
    <property type="evidence" value="ECO:0007669"/>
    <property type="project" value="TreeGrafter"/>
</dbReference>
<dbReference type="GO" id="GO:0034975">
    <property type="term" value="P:protein folding in endoplasmic reticulum"/>
    <property type="evidence" value="ECO:0007669"/>
    <property type="project" value="TreeGrafter"/>
</dbReference>
<dbReference type="InterPro" id="IPR008568">
    <property type="entry name" value="EMC3"/>
</dbReference>
<dbReference type="InterPro" id="IPR002809">
    <property type="entry name" value="EMC3/TMCO1"/>
</dbReference>
<dbReference type="PANTHER" id="PTHR13116">
    <property type="entry name" value="ER MEMBRANE PROTEIN COMPLEX SUBUNIT 3"/>
    <property type="match status" value="1"/>
</dbReference>
<dbReference type="PANTHER" id="PTHR13116:SF5">
    <property type="entry name" value="ER MEMBRANE PROTEIN COMPLEX SUBUNIT 3"/>
    <property type="match status" value="1"/>
</dbReference>
<dbReference type="Pfam" id="PF01956">
    <property type="entry name" value="EMC3_TMCO1"/>
    <property type="match status" value="1"/>
</dbReference>
<dbReference type="PIRSF" id="PIRSF010045">
    <property type="entry name" value="DUF850_TM_euk"/>
    <property type="match status" value="1"/>
</dbReference>
<dbReference type="SMART" id="SM01415">
    <property type="entry name" value="DUF106"/>
    <property type="match status" value="1"/>
</dbReference>
<keyword id="KW-0256">Endoplasmic reticulum</keyword>
<keyword id="KW-0472">Membrane</keyword>
<keyword id="KW-0812">Transmembrane</keyword>
<keyword id="KW-1133">Transmembrane helix</keyword>
<gene>
    <name type="primary">AIM27</name>
    <name type="synonym">EMC3</name>
    <name type="ORF">SCRG_03824</name>
</gene>
<feature type="chain" id="PRO_0000377673" description="ER membrane protein complex subunit 3">
    <location>
        <begin position="1"/>
        <end position="253"/>
    </location>
</feature>
<feature type="transmembrane region" description="Helical" evidence="2">
    <location>
        <begin position="10"/>
        <end position="30"/>
    </location>
</feature>
<feature type="transmembrane region" description="Helical" evidence="2">
    <location>
        <begin position="126"/>
        <end position="146"/>
    </location>
</feature>
<feature type="transmembrane region" description="Helical" evidence="2">
    <location>
        <begin position="176"/>
        <end position="196"/>
    </location>
</feature>
<sequence length="253" mass="28321">MLLDDQLKYWVLLPISIVMVLTGVLKQYIMTLITGSSANEAQPRVKLTEWQYLQWAQLLIGNGGNLSSDAFAAKKEFLVKDLTEERHLAKAKQQGGSQAGEVPNPFNDPNMSNAMMNMAKGNMASFIPQTIIMWWVNHFFAGFILMQLPFPLTAKFKEMLQTGIICQDLDVRWVSSISWYFISVLGLNPVYNLIGLNDQDMGIQAGIGGPQGPQGPPQSQVDKAMHAMANDLTIIQHETCLDNVEQRVLKQYM</sequence>
<comment type="function">
    <text evidence="1">The EMC seems to be required for efficient folding of proteins in the endoplasmic reticulum (ER).</text>
</comment>
<comment type="subunit">
    <text evidence="1">Component of the ER membrane protein complex (EMC), which is composed of EMC1, EMC2, EMC3, EMC4, EMC5 and EMC6.</text>
</comment>
<comment type="subcellular location">
    <subcellularLocation>
        <location evidence="1">Endoplasmic reticulum membrane</location>
        <topology evidence="1">Multi-pass membrane protein</topology>
    </subcellularLocation>
</comment>
<comment type="similarity">
    <text evidence="3">Belongs to the EMC3 family.</text>
</comment>
<comment type="sequence caution" evidence="3">
    <conflict type="erroneous initiation">
        <sequence resource="EMBL-CDS" id="EDV12905"/>
    </conflict>
</comment>